<organism>
    <name type="scientific">Halobacterium salinarum (strain ATCC 700922 / JCM 11081 / NRC-1)</name>
    <name type="common">Halobacterium halobium</name>
    <dbReference type="NCBI Taxonomy" id="64091"/>
    <lineage>
        <taxon>Archaea</taxon>
        <taxon>Methanobacteriati</taxon>
        <taxon>Methanobacteriota</taxon>
        <taxon>Stenosarchaea group</taxon>
        <taxon>Halobacteria</taxon>
        <taxon>Halobacteriales</taxon>
        <taxon>Halobacteriaceae</taxon>
        <taxon>Halobacterium</taxon>
        <taxon>Halobacterium salinarum NRC-34001</taxon>
    </lineage>
</organism>
<sequence length="83" mass="10023">MFVLDDLFVNPFLSLVDILQTMALDELYDTSEIRDQIKENQLLYEIGDRPADEYERRKQELEAQLRTAEQIRDQMRDRMEIKN</sequence>
<feature type="chain" id="PRO_0000182685" description="Gas vesicle protein G2">
    <location>
        <begin position="1"/>
        <end position="83"/>
    </location>
</feature>
<dbReference type="EMBL" id="X64730">
    <property type="protein sequence ID" value="CAA45990.1"/>
    <property type="molecule type" value="Genomic_DNA"/>
</dbReference>
<dbReference type="EMBL" id="X94688">
    <property type="protein sequence ID" value="CAA64346.1"/>
    <property type="molecule type" value="Genomic_DNA"/>
</dbReference>
<dbReference type="EMBL" id="AE004438">
    <property type="protein sequence ID" value="AAG20891.1"/>
    <property type="status" value="ALT_INIT"/>
    <property type="molecule type" value="Genomic_DNA"/>
</dbReference>
<dbReference type="RefSeq" id="WP_012289627.1">
    <property type="nucleotide sequence ID" value="NZ_BK010831.1"/>
</dbReference>
<dbReference type="SMR" id="P33960"/>
<dbReference type="GeneID" id="89350589"/>
<dbReference type="KEGG" id="hal:VNG_6236G"/>
<dbReference type="PATRIC" id="fig|64091.14.peg.2239"/>
<dbReference type="HOGENOM" id="CLU_185764_0_0_2"/>
<dbReference type="InParanoid" id="P33960"/>
<dbReference type="OrthoDB" id="214403at2157"/>
<dbReference type="Proteomes" id="UP000000554">
    <property type="component" value="Plasmid pNRC200"/>
</dbReference>
<dbReference type="GO" id="GO:0031411">
    <property type="term" value="C:gas vesicle"/>
    <property type="evidence" value="ECO:0007669"/>
    <property type="project" value="UniProtKB-SubCell"/>
</dbReference>
<dbReference type="InterPro" id="IPR054797">
    <property type="entry name" value="Gas_vesic_GvpG_halobact"/>
</dbReference>
<dbReference type="InterPro" id="IPR007804">
    <property type="entry name" value="GvpG"/>
</dbReference>
<dbReference type="NCBIfam" id="NF045779">
    <property type="entry name" value="gas_vesic_GvpG"/>
    <property type="match status" value="1"/>
</dbReference>
<dbReference type="Pfam" id="PF05120">
    <property type="entry name" value="GvpG"/>
    <property type="match status" value="1"/>
</dbReference>
<keyword id="KW-0304">Gas vesicle</keyword>
<keyword id="KW-0614">Plasmid</keyword>
<keyword id="KW-1185">Reference proteome</keyword>
<gene>
    <name evidence="6 8" type="primary">gvpG2</name>
    <name evidence="6" type="synonym">c-gvpG</name>
    <name type="synonym">gvpG</name>
    <name evidence="8" type="ordered locus">VNG_6236G</name>
</gene>
<comment type="function">
    <text evidence="1 3">Proteins GvpF to GvpM might be involved in nucleating gas vesicle formation. A minor component of the gas vesicle (By similarity). Gas vesicles are hollow, gas filled proteinaceous nanostructures found in several microbial planktonic microorganisms. They allow positioning of halobacteria at the optimal depth for growth in the poorly aerated, shallow brine pools of their habitat (PubMed:33711860).</text>
</comment>
<comment type="function">
    <text evidence="5">Expression of 2 c-vac DNA fragments containing 2 divergently transcribed regions (gvpE-gvpF-gvpG-gvpH-gvpI-gvpJ-gvpK-gvpL-gvpM and gvpA-gvpC-gvpN-gvpO) allows H.volcanii to produce gas vesicles.</text>
</comment>
<comment type="subunit">
    <text evidence="1">GvpF to GvpM interact with each other in vitro, and may form multi-subunit complex(es).</text>
</comment>
<comment type="subcellular location">
    <subcellularLocation>
        <location evidence="1">Gas vesicle</location>
    </subcellularLocation>
</comment>
<comment type="induction">
    <text evidence="3 4">In PHH4 (a deletion of the p-vac locus) transcribed in all growth phases, maximal expression in mid-stationary phase. An unstable 6kb transcript able to cover gvpD-gvpE-gvpF-gvpG-gvpH-gvpI-gvpJ-gvpK-gvpL-gvpM is detected, as well as smaller transcripts (PubMed:8763925). Gas vesicles appear earlier when grown in static culture, possibly due to O(2)-limitation (PubMed:33711860).</text>
</comment>
<comment type="miscellaneous">
    <text evidence="2 4">Encoded in a 14-gene locus called c-vac which produces cylindrical gas vesicles only in the stationary growth phase.</text>
</comment>
<comment type="similarity">
    <text evidence="7">Belongs to the gas vesicle GvpG family.</text>
</comment>
<comment type="sequence caution" evidence="7">
    <conflict type="erroneous initiation">
        <sequence resource="EMBL-CDS" id="AAG20891"/>
    </conflict>
    <text>Truncated N-terminus.</text>
</comment>
<geneLocation type="plasmid">
    <name>pNRC200</name>
</geneLocation>
<name>GVPG2_HALSA</name>
<proteinExistence type="evidence at protein level"/>
<evidence type="ECO:0000250" key="1">
    <source>
        <dbReference type="UniProtKB" id="P24371"/>
    </source>
</evidence>
<evidence type="ECO:0000269" key="2">
    <source>
    </source>
</evidence>
<evidence type="ECO:0000269" key="3">
    <source>
    </source>
</evidence>
<evidence type="ECO:0000269" key="4">
    <source>
    </source>
</evidence>
<evidence type="ECO:0000269" key="5">
    <source>
    </source>
</evidence>
<evidence type="ECO:0000303" key="6">
    <source>
    </source>
</evidence>
<evidence type="ECO:0000305" key="7"/>
<evidence type="ECO:0000312" key="8">
    <source>
        <dbReference type="EMBL" id="AAG20891.1"/>
    </source>
</evidence>
<evidence type="ECO:0000312" key="9">
    <source>
        <dbReference type="EMBL" id="CAA64346.1"/>
    </source>
</evidence>
<protein>
    <recommendedName>
        <fullName>Gas vesicle protein G2</fullName>
        <shortName>GvpG2</shortName>
    </recommendedName>
</protein>
<reference key="1">
    <citation type="journal article" date="1992" name="J. Mol. Biol.">
        <title>Three different but related gene clusters encoding gas vesicles in halophilic archaea.</title>
        <authorList>
            <person name="Englert C."/>
            <person name="Krueger K."/>
            <person name="Offner S."/>
            <person name="Pfeifer F."/>
        </authorList>
    </citation>
    <scope>NUCLEOTIDE SEQUENCE [GENOMIC DNA]</scope>
    <scope>GAS VESICLE GENE CLUSTER</scope>
    <source>
        <strain>NRC-817</strain>
    </source>
</reference>
<reference evidence="9" key="2">
    <citation type="journal article" date="1996" name="J. Bacteriol.">
        <title>Transcript analysis of the c-vac region and differential synthesis of the two regulatory gas vesicle proteins GvpD and GvpE in Halobacterium salinarium PHH4.</title>
        <authorList>
            <person name="Krueger K."/>
            <person name="Pfeifer F."/>
        </authorList>
    </citation>
    <scope>NUCLEOTIDE SEQUENCE [GENOMIC DNA]</scope>
    <scope>INDUCTION</scope>
    <source>
        <strain>PHH1 /PHH4</strain>
    </source>
</reference>
<reference evidence="8" key="3">
    <citation type="journal article" date="2000" name="Proc. Natl. Acad. Sci. U.S.A.">
        <title>Genome sequence of Halobacterium species NRC-1.</title>
        <authorList>
            <person name="Ng W.V."/>
            <person name="Kennedy S.P."/>
            <person name="Mahairas G.G."/>
            <person name="Berquist B."/>
            <person name="Pan M."/>
            <person name="Shukla H.D."/>
            <person name="Lasky S.R."/>
            <person name="Baliga N.S."/>
            <person name="Thorsson V."/>
            <person name="Sbrogna J."/>
            <person name="Swartzell S."/>
            <person name="Weir D."/>
            <person name="Hall J."/>
            <person name="Dahl T.A."/>
            <person name="Welti R."/>
            <person name="Goo Y.A."/>
            <person name="Leithauser B."/>
            <person name="Keller K."/>
            <person name="Cruz R."/>
            <person name="Danson M.J."/>
            <person name="Hough D.W."/>
            <person name="Maddocks D.G."/>
            <person name="Jablonski P.E."/>
            <person name="Krebs M.P."/>
            <person name="Angevine C.M."/>
            <person name="Dale H."/>
            <person name="Isenbarger T.A."/>
            <person name="Peck R.F."/>
            <person name="Pohlschroder M."/>
            <person name="Spudich J.L."/>
            <person name="Jung K.-H."/>
            <person name="Alam M."/>
            <person name="Freitas T."/>
            <person name="Hou S."/>
            <person name="Daniels C.J."/>
            <person name="Dennis P.P."/>
            <person name="Omer A.D."/>
            <person name="Ebhardt H."/>
            <person name="Lowe T.M."/>
            <person name="Liang P."/>
            <person name="Riley M."/>
            <person name="Hood L."/>
            <person name="DasSarma S."/>
        </authorList>
    </citation>
    <scope>NUCLEOTIDE SEQUENCE [LARGE SCALE GENOMIC DNA]</scope>
    <source>
        <strain>ATCC 700922 / JCM 11081 / NRC-1</strain>
        <plasmid>pNRC200</plasmid>
    </source>
</reference>
<reference key="4">
    <citation type="journal article" date="1997" name="Microbiology">
        <title>Growth competition between Halobacterium salinarium strain PHH1 and mutants affected in gas vesicle synthesis.</title>
        <authorList>
            <person name="Beard S.J."/>
            <person name="Hayes P.K."/>
            <person name="Walsby A.E."/>
        </authorList>
    </citation>
    <scope>FUNCTION IN BUOYANCY</scope>
    <scope>POSSIBLE INDUCTION BY OXYGEN LIMITATION</scope>
    <source>
        <strain>PHH1</strain>
    </source>
</reference>
<reference key="5">
    <citation type="journal article" date="1998" name="Microbiology">
        <title>Structural characteristics of halobacterial gas vesicles.</title>
        <authorList>
            <person name="Offner S."/>
            <person name="Ziese U."/>
            <person name="Wanner G."/>
            <person name="Typke D."/>
            <person name="Pfeifer F."/>
        </authorList>
    </citation>
    <scope>FUNCTION</scope>
    <source>
        <strain>PHH1</strain>
    </source>
</reference>
<accession>P33960</accession>
<accession>Q9HHT5</accession>